<dbReference type="EMBL" id="AB022223">
    <property type="protein sequence ID" value="BAB01245.1"/>
    <property type="molecule type" value="Genomic_DNA"/>
</dbReference>
<dbReference type="EMBL" id="CP002686">
    <property type="protein sequence ID" value="AEE76667.2"/>
    <property type="molecule type" value="Genomic_DNA"/>
</dbReference>
<dbReference type="EMBL" id="DQ056604">
    <property type="protein sequence ID" value="AAY78752.1"/>
    <property type="status" value="ALT_INIT"/>
    <property type="molecule type" value="mRNA"/>
</dbReference>
<dbReference type="RefSeq" id="NP_188909.2">
    <property type="nucleotide sequence ID" value="NM_113169.2"/>
</dbReference>
<dbReference type="FunCoup" id="Q9LUJ1">
    <property type="interactions" value="4"/>
</dbReference>
<dbReference type="STRING" id="3702.Q9LUJ1"/>
<dbReference type="GlyGen" id="Q9LUJ1">
    <property type="glycosylation" value="1 site"/>
</dbReference>
<dbReference type="iPTMnet" id="Q9LUJ1"/>
<dbReference type="PaxDb" id="3702-AT3G22700.1"/>
<dbReference type="EnsemblPlants" id="AT3G22700.1">
    <property type="protein sequence ID" value="AT3G22700.1"/>
    <property type="gene ID" value="AT3G22700"/>
</dbReference>
<dbReference type="GeneID" id="821841"/>
<dbReference type="Gramene" id="AT3G22700.1">
    <property type="protein sequence ID" value="AT3G22700.1"/>
    <property type="gene ID" value="AT3G22700"/>
</dbReference>
<dbReference type="KEGG" id="ath:AT3G22700"/>
<dbReference type="Araport" id="AT3G22700"/>
<dbReference type="TAIR" id="AT3G22700"/>
<dbReference type="HOGENOM" id="CLU_034692_0_0_1"/>
<dbReference type="InParanoid" id="Q9LUJ1"/>
<dbReference type="OMA" id="MTNEIDG"/>
<dbReference type="PhylomeDB" id="Q9LUJ1"/>
<dbReference type="PRO" id="PR:Q9LUJ1"/>
<dbReference type="Proteomes" id="UP000006548">
    <property type="component" value="Chromosome 3"/>
</dbReference>
<dbReference type="ExpressionAtlas" id="Q9LUJ1">
    <property type="expression patterns" value="baseline and differential"/>
</dbReference>
<dbReference type="CDD" id="cd22157">
    <property type="entry name" value="F-box_AtFBW1-like"/>
    <property type="match status" value="1"/>
</dbReference>
<dbReference type="Gene3D" id="1.20.1280.50">
    <property type="match status" value="1"/>
</dbReference>
<dbReference type="InterPro" id="IPR006527">
    <property type="entry name" value="F-box-assoc_dom_typ1"/>
</dbReference>
<dbReference type="InterPro" id="IPR017451">
    <property type="entry name" value="F-box-assoc_interact_dom"/>
</dbReference>
<dbReference type="InterPro" id="IPR036047">
    <property type="entry name" value="F-box-like_dom_sf"/>
</dbReference>
<dbReference type="InterPro" id="IPR001810">
    <property type="entry name" value="F-box_dom"/>
</dbReference>
<dbReference type="InterPro" id="IPR050796">
    <property type="entry name" value="SCF_F-box_component"/>
</dbReference>
<dbReference type="NCBIfam" id="TIGR01640">
    <property type="entry name" value="F_box_assoc_1"/>
    <property type="match status" value="1"/>
</dbReference>
<dbReference type="PANTHER" id="PTHR31672">
    <property type="entry name" value="BNACNNG10540D PROTEIN"/>
    <property type="match status" value="1"/>
</dbReference>
<dbReference type="PANTHER" id="PTHR31672:SF13">
    <property type="entry name" value="F-BOX PROTEIN CPR30-LIKE"/>
    <property type="match status" value="1"/>
</dbReference>
<dbReference type="Pfam" id="PF00646">
    <property type="entry name" value="F-box"/>
    <property type="match status" value="1"/>
</dbReference>
<dbReference type="Pfam" id="PF07734">
    <property type="entry name" value="FBA_1"/>
    <property type="match status" value="1"/>
</dbReference>
<dbReference type="SMART" id="SM00256">
    <property type="entry name" value="FBOX"/>
    <property type="match status" value="1"/>
</dbReference>
<dbReference type="SUPFAM" id="SSF81383">
    <property type="entry name" value="F-box domain"/>
    <property type="match status" value="1"/>
</dbReference>
<dbReference type="PROSITE" id="PS50181">
    <property type="entry name" value="FBOX"/>
    <property type="match status" value="1"/>
</dbReference>
<name>FB324_ARATH</name>
<accession>Q9LUJ1</accession>
<accession>F4J1L7</accession>
<accession>Q4PSN2</accession>
<organism>
    <name type="scientific">Arabidopsis thaliana</name>
    <name type="common">Mouse-ear cress</name>
    <dbReference type="NCBI Taxonomy" id="3702"/>
    <lineage>
        <taxon>Eukaryota</taxon>
        <taxon>Viridiplantae</taxon>
        <taxon>Streptophyta</taxon>
        <taxon>Embryophyta</taxon>
        <taxon>Tracheophyta</taxon>
        <taxon>Spermatophyta</taxon>
        <taxon>Magnoliopsida</taxon>
        <taxon>eudicotyledons</taxon>
        <taxon>Gunneridae</taxon>
        <taxon>Pentapetalae</taxon>
        <taxon>rosids</taxon>
        <taxon>malvids</taxon>
        <taxon>Brassicales</taxon>
        <taxon>Brassicaceae</taxon>
        <taxon>Camelineae</taxon>
        <taxon>Arabidopsis</taxon>
    </lineage>
</organism>
<protein>
    <recommendedName>
        <fullName>F-box protein At3g22700</fullName>
    </recommendedName>
</protein>
<proteinExistence type="evidence at transcript level"/>
<evidence type="ECO:0000255" key="1">
    <source>
        <dbReference type="PROSITE-ProRule" id="PRU00080"/>
    </source>
</evidence>
<evidence type="ECO:0000305" key="2"/>
<sequence length="339" mass="40211">MMSNLPLDLVEEILSRVPATSLKRLRSTCRQWNALLKDRRFTEKHFRKAPKESLVLMLKEISVNLNVTPPSIEFKDALGLKDSHSNSEQVDIVQVLHCDGLLLCTTKDNRHVVWNPCLGETHWIQFKVDYGRVYSSFALGYIQNNESCRSYKILWRWKSNDYKSSPRQRGFEIYEFISDKWRVIDDVNHDSLVNHNYLGRCCRVSLKGNIYWLVDDVEDNSRSLLMFDFKTERFKRLCLPHFENVGHMVLSFVREEQLSVLYWSRATPKMEIWITNNIDTDATLLWRLHLDTRFNCVRIFSSLYFEEEKKVVLCCNVKLLMMIRSARTWYTLSERTMDI</sequence>
<comment type="sequence caution" evidence="2">
    <conflict type="erroneous initiation">
        <sequence resource="EMBL-CDS" id="AAY78752"/>
    </conflict>
    <text>Truncated N-terminus.</text>
</comment>
<keyword id="KW-1185">Reference proteome</keyword>
<gene>
    <name type="ordered locus">At3g22700</name>
    <name type="ORF">MWI23.7</name>
</gene>
<feature type="chain" id="PRO_0000396039" description="F-box protein At3g22700">
    <location>
        <begin position="1"/>
        <end position="339"/>
    </location>
</feature>
<feature type="domain" description="F-box" evidence="1">
    <location>
        <begin position="1"/>
        <end position="49"/>
    </location>
</feature>
<reference key="1">
    <citation type="journal article" date="2000" name="DNA Res.">
        <title>Structural analysis of Arabidopsis thaliana chromosome 3. I. Sequence features of the regions of 4,504,864 bp covered by sixty P1 and TAC clones.</title>
        <authorList>
            <person name="Sato S."/>
            <person name="Nakamura Y."/>
            <person name="Kaneko T."/>
            <person name="Katoh T."/>
            <person name="Asamizu E."/>
            <person name="Tabata S."/>
        </authorList>
    </citation>
    <scope>NUCLEOTIDE SEQUENCE [LARGE SCALE GENOMIC DNA]</scope>
    <source>
        <strain>cv. Columbia</strain>
    </source>
</reference>
<reference key="2">
    <citation type="journal article" date="2017" name="Plant J.">
        <title>Araport11: a complete reannotation of the Arabidopsis thaliana reference genome.</title>
        <authorList>
            <person name="Cheng C.Y."/>
            <person name="Krishnakumar V."/>
            <person name="Chan A.P."/>
            <person name="Thibaud-Nissen F."/>
            <person name="Schobel S."/>
            <person name="Town C.D."/>
        </authorList>
    </citation>
    <scope>GENOME REANNOTATION</scope>
    <source>
        <strain>cv. Columbia</strain>
    </source>
</reference>
<reference key="3">
    <citation type="submission" date="2005-05" db="EMBL/GenBank/DDBJ databases">
        <authorList>
            <person name="Underwood B.A."/>
            <person name="Xiao Y.-L."/>
            <person name="Moskal W.A. Jr."/>
            <person name="Monaghan E.L."/>
            <person name="Wang W."/>
            <person name="Redman J.C."/>
            <person name="Wu H.C."/>
            <person name="Utterback T."/>
            <person name="Town C.D."/>
        </authorList>
    </citation>
    <scope>NUCLEOTIDE SEQUENCE [LARGE SCALE MRNA]</scope>
    <source>
        <strain>cv. Columbia</strain>
    </source>
</reference>